<feature type="chain" id="PRO_1000046792" description="Dual-action ribosomal maturation protein DarP">
    <location>
        <begin position="1"/>
        <end position="181"/>
    </location>
</feature>
<feature type="region of interest" description="Disordered" evidence="2">
    <location>
        <begin position="1"/>
        <end position="24"/>
    </location>
</feature>
<gene>
    <name evidence="1" type="primary">darP</name>
    <name type="ordered locus">AHA_3937</name>
</gene>
<evidence type="ECO:0000255" key="1">
    <source>
        <dbReference type="HAMAP-Rule" id="MF_00765"/>
    </source>
</evidence>
<evidence type="ECO:0000256" key="2">
    <source>
        <dbReference type="SAM" id="MobiDB-lite"/>
    </source>
</evidence>
<keyword id="KW-0963">Cytoplasm</keyword>
<keyword id="KW-1185">Reference proteome</keyword>
<keyword id="KW-0690">Ribosome biogenesis</keyword>
<keyword id="KW-0694">RNA-binding</keyword>
<keyword id="KW-0699">rRNA-binding</keyword>
<name>DARP_AERHH</name>
<comment type="function">
    <text evidence="1">Member of a network of 50S ribosomal subunit biogenesis factors which assembles along the 30S-50S interface, preventing incorrect 23S rRNA structures from forming. Promotes peptidyl transferase center (PTC) maturation.</text>
</comment>
<comment type="subcellular location">
    <subcellularLocation>
        <location evidence="1">Cytoplasm</location>
    </subcellularLocation>
    <text evidence="1">Associates with late stage pre-50S ribosomal subunits.</text>
</comment>
<comment type="similarity">
    <text evidence="1">Belongs to the DarP family.</text>
</comment>
<protein>
    <recommendedName>
        <fullName evidence="1">Dual-action ribosomal maturation protein DarP</fullName>
    </recommendedName>
    <alternativeName>
        <fullName evidence="1">Large ribosomal subunit assembly factor DarP</fullName>
    </alternativeName>
</protein>
<reference key="1">
    <citation type="journal article" date="2006" name="J. Bacteriol.">
        <title>Genome sequence of Aeromonas hydrophila ATCC 7966T: jack of all trades.</title>
        <authorList>
            <person name="Seshadri R."/>
            <person name="Joseph S.W."/>
            <person name="Chopra A.K."/>
            <person name="Sha J."/>
            <person name="Shaw J."/>
            <person name="Graf J."/>
            <person name="Haft D.H."/>
            <person name="Wu M."/>
            <person name="Ren Q."/>
            <person name="Rosovitz M.J."/>
            <person name="Madupu R."/>
            <person name="Tallon L."/>
            <person name="Kim M."/>
            <person name="Jin S."/>
            <person name="Vuong H."/>
            <person name="Stine O.C."/>
            <person name="Ali A."/>
            <person name="Horneman A.J."/>
            <person name="Heidelberg J.F."/>
        </authorList>
    </citation>
    <scope>NUCLEOTIDE SEQUENCE [LARGE SCALE GENOMIC DNA]</scope>
    <source>
        <strain>ATCC 7966 / DSM 30187 / BCRC 13018 / CCUG 14551 / JCM 1027 / KCTC 2358 / NCIMB 9240 / NCTC 8049</strain>
    </source>
</reference>
<proteinExistence type="inferred from homology"/>
<accession>A0KQ25</accession>
<sequence>MTGIKRPMSQYQDDNEWEDWGPSKSQLKRDAEALQKMGEEIVSLSHSELEKIPLDEELAEAVELGRKLKPKKDESFRRHLQFIGRLMRSRDVEPIVEALSIIKNRHSTVNARLHRLEQWRERLINEGDSALNELMSQFHELDRQKLRQLIRTANKERELNKPPVAYREMYQYLRGEIEDLL</sequence>
<organism>
    <name type="scientific">Aeromonas hydrophila subsp. hydrophila (strain ATCC 7966 / DSM 30187 / BCRC 13018 / CCUG 14551 / JCM 1027 / KCTC 2358 / NCIMB 9240 / NCTC 8049)</name>
    <dbReference type="NCBI Taxonomy" id="380703"/>
    <lineage>
        <taxon>Bacteria</taxon>
        <taxon>Pseudomonadati</taxon>
        <taxon>Pseudomonadota</taxon>
        <taxon>Gammaproteobacteria</taxon>
        <taxon>Aeromonadales</taxon>
        <taxon>Aeromonadaceae</taxon>
        <taxon>Aeromonas</taxon>
    </lineage>
</organism>
<dbReference type="EMBL" id="CP000462">
    <property type="protein sequence ID" value="ABK38260.1"/>
    <property type="molecule type" value="Genomic_DNA"/>
</dbReference>
<dbReference type="RefSeq" id="YP_858376.1">
    <property type="nucleotide sequence ID" value="NC_008570.1"/>
</dbReference>
<dbReference type="SMR" id="A0KQ25"/>
<dbReference type="STRING" id="380703.AHA_3937"/>
<dbReference type="EnsemblBacteria" id="ABK38260">
    <property type="protein sequence ID" value="ABK38260"/>
    <property type="gene ID" value="AHA_3937"/>
</dbReference>
<dbReference type="KEGG" id="aha:AHA_3937"/>
<dbReference type="PATRIC" id="fig|380703.7.peg.3908"/>
<dbReference type="eggNOG" id="COG3028">
    <property type="taxonomic scope" value="Bacteria"/>
</dbReference>
<dbReference type="HOGENOM" id="CLU_106757_3_0_6"/>
<dbReference type="OrthoDB" id="5293604at2"/>
<dbReference type="Proteomes" id="UP000000756">
    <property type="component" value="Chromosome"/>
</dbReference>
<dbReference type="GO" id="GO:0005829">
    <property type="term" value="C:cytosol"/>
    <property type="evidence" value="ECO:0007669"/>
    <property type="project" value="TreeGrafter"/>
</dbReference>
<dbReference type="GO" id="GO:0043022">
    <property type="term" value="F:ribosome binding"/>
    <property type="evidence" value="ECO:0007669"/>
    <property type="project" value="UniProtKB-UniRule"/>
</dbReference>
<dbReference type="GO" id="GO:0019843">
    <property type="term" value="F:rRNA binding"/>
    <property type="evidence" value="ECO:0007669"/>
    <property type="project" value="UniProtKB-UniRule"/>
</dbReference>
<dbReference type="GO" id="GO:1902626">
    <property type="term" value="P:assembly of large subunit precursor of preribosome"/>
    <property type="evidence" value="ECO:0007669"/>
    <property type="project" value="UniProtKB-UniRule"/>
</dbReference>
<dbReference type="CDD" id="cd16331">
    <property type="entry name" value="YjgA-like"/>
    <property type="match status" value="1"/>
</dbReference>
<dbReference type="Gene3D" id="1.10.60.30">
    <property type="entry name" value="PSPTO4464-like domains"/>
    <property type="match status" value="2"/>
</dbReference>
<dbReference type="HAMAP" id="MF_00765">
    <property type="entry name" value="DarP"/>
    <property type="match status" value="1"/>
</dbReference>
<dbReference type="InterPro" id="IPR006839">
    <property type="entry name" value="DarP"/>
</dbReference>
<dbReference type="InterPro" id="IPR023153">
    <property type="entry name" value="DarP_sf"/>
</dbReference>
<dbReference type="NCBIfam" id="NF003593">
    <property type="entry name" value="PRK05255.1-1"/>
    <property type="match status" value="1"/>
</dbReference>
<dbReference type="PANTHER" id="PTHR38101">
    <property type="entry name" value="UPF0307 PROTEIN YJGA"/>
    <property type="match status" value="1"/>
</dbReference>
<dbReference type="PANTHER" id="PTHR38101:SF1">
    <property type="entry name" value="UPF0307 PROTEIN YJGA"/>
    <property type="match status" value="1"/>
</dbReference>
<dbReference type="Pfam" id="PF04751">
    <property type="entry name" value="DarP"/>
    <property type="match status" value="1"/>
</dbReference>
<dbReference type="PIRSF" id="PIRSF016183">
    <property type="entry name" value="UCP016183"/>
    <property type="match status" value="1"/>
</dbReference>
<dbReference type="SUPFAM" id="SSF158710">
    <property type="entry name" value="PSPTO4464-like"/>
    <property type="match status" value="1"/>
</dbReference>